<organism>
    <name type="scientific">Kluyveromyces lactis (strain ATCC 8585 / CBS 2359 / DSM 70799 / NBRC 1267 / NRRL Y-1140 / WM37)</name>
    <name type="common">Yeast</name>
    <name type="synonym">Candida sphaerica</name>
    <dbReference type="NCBI Taxonomy" id="284590"/>
    <lineage>
        <taxon>Eukaryota</taxon>
        <taxon>Fungi</taxon>
        <taxon>Dikarya</taxon>
        <taxon>Ascomycota</taxon>
        <taxon>Saccharomycotina</taxon>
        <taxon>Saccharomycetes</taxon>
        <taxon>Saccharomycetales</taxon>
        <taxon>Saccharomycetaceae</taxon>
        <taxon>Kluyveromyces</taxon>
    </lineage>
</organism>
<keyword id="KW-0238">DNA-binding</keyword>
<keyword id="KW-0479">Metal-binding</keyword>
<keyword id="KW-0539">Nucleus</keyword>
<keyword id="KW-1185">Reference proteome</keyword>
<keyword id="KW-0804">Transcription</keyword>
<keyword id="KW-0805">Transcription regulation</keyword>
<gene>
    <name evidence="3" type="primary">PUL4</name>
    <name type="ordered locus">KLLA0_C19228g</name>
</gene>
<feature type="chain" id="PRO_0000445900" description="Transcriptional regulator PUL4">
    <location>
        <begin position="1"/>
        <end position="591"/>
    </location>
</feature>
<feature type="DNA-binding region" description="Zn(2)-C6 fungal-type" evidence="1">
    <location>
        <begin position="3"/>
        <end position="29"/>
    </location>
</feature>
<reference key="1">
    <citation type="journal article" date="2004" name="Nature">
        <title>Genome evolution in yeasts.</title>
        <authorList>
            <person name="Dujon B."/>
            <person name="Sherman D."/>
            <person name="Fischer G."/>
            <person name="Durrens P."/>
            <person name="Casaregola S."/>
            <person name="Lafontaine I."/>
            <person name="de Montigny J."/>
            <person name="Marck C."/>
            <person name="Neuveglise C."/>
            <person name="Talla E."/>
            <person name="Goffard N."/>
            <person name="Frangeul L."/>
            <person name="Aigle M."/>
            <person name="Anthouard V."/>
            <person name="Babour A."/>
            <person name="Barbe V."/>
            <person name="Barnay S."/>
            <person name="Blanchin S."/>
            <person name="Beckerich J.-M."/>
            <person name="Beyne E."/>
            <person name="Bleykasten C."/>
            <person name="Boisrame A."/>
            <person name="Boyer J."/>
            <person name="Cattolico L."/>
            <person name="Confanioleri F."/>
            <person name="de Daruvar A."/>
            <person name="Despons L."/>
            <person name="Fabre E."/>
            <person name="Fairhead C."/>
            <person name="Ferry-Dumazet H."/>
            <person name="Groppi A."/>
            <person name="Hantraye F."/>
            <person name="Hennequin C."/>
            <person name="Jauniaux N."/>
            <person name="Joyet P."/>
            <person name="Kachouri R."/>
            <person name="Kerrest A."/>
            <person name="Koszul R."/>
            <person name="Lemaire M."/>
            <person name="Lesur I."/>
            <person name="Ma L."/>
            <person name="Muller H."/>
            <person name="Nicaud J.-M."/>
            <person name="Nikolski M."/>
            <person name="Oztas S."/>
            <person name="Ozier-Kalogeropoulos O."/>
            <person name="Pellenz S."/>
            <person name="Potier S."/>
            <person name="Richard G.-F."/>
            <person name="Straub M.-L."/>
            <person name="Suleau A."/>
            <person name="Swennen D."/>
            <person name="Tekaia F."/>
            <person name="Wesolowski-Louvel M."/>
            <person name="Westhof E."/>
            <person name="Wirth B."/>
            <person name="Zeniou-Meyer M."/>
            <person name="Zivanovic Y."/>
            <person name="Bolotin-Fukuhara M."/>
            <person name="Thierry A."/>
            <person name="Bouchier C."/>
            <person name="Caudron B."/>
            <person name="Scarpelli C."/>
            <person name="Gaillardin C."/>
            <person name="Weissenbach J."/>
            <person name="Wincker P."/>
            <person name="Souciet J.-L."/>
        </authorList>
    </citation>
    <scope>NUCLEOTIDE SEQUENCE [LARGE SCALE GENOMIC DNA]</scope>
    <source>
        <strain>ATCC 8585 / CBS 2359 / DSM 70799 / NBRC 1267 / NRRL Y-1140 / WM37</strain>
    </source>
</reference>
<reference key="2">
    <citation type="journal article" date="2018" name="Proc. Natl. Acad. Sci. U.S.A.">
        <title>Functional and evolutionary characterization of a secondary metabolite gene cluster in budding yeasts.</title>
        <authorList>
            <person name="Krause D.J."/>
            <person name="Kominek J."/>
            <person name="Opulente D.A."/>
            <person name="Shen X.X."/>
            <person name="Zhou X."/>
            <person name="Langdon Q.K."/>
            <person name="DeVirgilio J."/>
            <person name="Hulfachor A.B."/>
            <person name="Kurtzman C.P."/>
            <person name="Rokas A."/>
            <person name="Hittinger C.T."/>
        </authorList>
    </citation>
    <scope>IDENTIFICATION</scope>
    <scope>DISRUPTION PHENOTYPE</scope>
    <scope>FUNCTION</scope>
</reference>
<sequence length="591" mass="67427">MACLECKKRKQKCDGQKPCRRCTKLNVKCIYGTDRRKDKRKIKDGSNMFIFKNQTLCNDKINGIVPHPLSHDTITTKETWEPSYPLFSDDINPADIISMENTDGSIPLQFDLDFTSLESCDVNDFLRLIGDTFPANDADTLDMNQMGGFNTPSISHNTQDDKSQIAIQRNRLIDVIFGDDSHTPPGILREHIFELSERHEDLEALDFDDNGKFLLSTVLCLGALTLRKRELLNRDSNQPSTNGIPEVAAGAYKYYTIATDLIPAVHAAPNIDGFCGLVLMANFMTIMIPLEGQLYLSNNALEVAVALNFHKRESYDEMIVSNPAQLGVFLLFWNLWCSSCMLATLLGKQPFLTLDNISLPPPHQMQHTVSSSPLSINFMRLRIQLATLQTKIFQRLYVYGSLNKVLFQEIETELSLLSTQISNMKCYPIYDEGLFYRSKVLMLELSCLKAHNAFLLYRPNLIQKKSLHAVDAAKHIILEIWSHYTKQFPKNEKDLVDHLDWNFSYPLRTASLTLSISCVILQKYQQSLNFLEEYGIFEYNLALGVLNDLIQVVPIEKRLINLLTVSRTTVEDANESNREDSLRFWTNMLMC</sequence>
<proteinExistence type="inferred from homology"/>
<protein>
    <recommendedName>
        <fullName evidence="3">Transcriptional regulator PUL4</fullName>
    </recommendedName>
    <alternativeName>
        <fullName evidence="3">Pulcherrimin biosynthesis cluster protein 4</fullName>
    </alternativeName>
</protein>
<comment type="function">
    <text evidence="2">Transcription factor involved in regulation of the PUL gene cluster that mediates the formation of pulcherrimin, a red iron-containing pigment composed of two cyclized and modified leucine molecules that acts as a siderophore, a chelator that binds iron outside the cell for subsequent uptake.</text>
</comment>
<comment type="subcellular location">
    <subcellularLocation>
        <location evidence="1">Nucleus</location>
    </subcellularLocation>
</comment>
<comment type="disruption phenotype">
    <text evidence="2">Impairs pulcherrimin production and subsequent red pigmentation.</text>
</comment>
<name>PUL4_KLULA</name>
<evidence type="ECO:0000255" key="1">
    <source>
        <dbReference type="PROSITE-ProRule" id="PRU00227"/>
    </source>
</evidence>
<evidence type="ECO:0000269" key="2">
    <source>
    </source>
</evidence>
<evidence type="ECO:0000303" key="3">
    <source>
    </source>
</evidence>
<dbReference type="EMBL" id="CR382123">
    <property type="protein sequence ID" value="CAH01909.1"/>
    <property type="molecule type" value="Genomic_DNA"/>
</dbReference>
<dbReference type="RefSeq" id="XP_453058.1">
    <property type="nucleotide sequence ID" value="XM_453058.1"/>
</dbReference>
<dbReference type="SMR" id="Q6CSN1"/>
<dbReference type="FunCoup" id="Q6CSN1">
    <property type="interactions" value="25"/>
</dbReference>
<dbReference type="STRING" id="284590.Q6CSN1"/>
<dbReference type="PaxDb" id="284590-Q6CSN1"/>
<dbReference type="GeneID" id="2892646"/>
<dbReference type="KEGG" id="kla:KLLA0_C19228g"/>
<dbReference type="eggNOG" id="ENOG502QRWI">
    <property type="taxonomic scope" value="Eukaryota"/>
</dbReference>
<dbReference type="HOGENOM" id="CLU_449939_0_0_1"/>
<dbReference type="InParanoid" id="Q6CSN1"/>
<dbReference type="OMA" id="LMANFMT"/>
<dbReference type="Proteomes" id="UP000000598">
    <property type="component" value="Chromosome C"/>
</dbReference>
<dbReference type="GO" id="GO:0005634">
    <property type="term" value="C:nucleus"/>
    <property type="evidence" value="ECO:0007669"/>
    <property type="project" value="UniProtKB-SubCell"/>
</dbReference>
<dbReference type="GO" id="GO:0000981">
    <property type="term" value="F:DNA-binding transcription factor activity, RNA polymerase II-specific"/>
    <property type="evidence" value="ECO:0007669"/>
    <property type="project" value="InterPro"/>
</dbReference>
<dbReference type="GO" id="GO:0000978">
    <property type="term" value="F:RNA polymerase II cis-regulatory region sequence-specific DNA binding"/>
    <property type="evidence" value="ECO:0007669"/>
    <property type="project" value="TreeGrafter"/>
</dbReference>
<dbReference type="GO" id="GO:0008270">
    <property type="term" value="F:zinc ion binding"/>
    <property type="evidence" value="ECO:0007669"/>
    <property type="project" value="InterPro"/>
</dbReference>
<dbReference type="GO" id="GO:0000435">
    <property type="term" value="P:positive regulation of transcription from RNA polymerase II promoter by galactose"/>
    <property type="evidence" value="ECO:0007669"/>
    <property type="project" value="TreeGrafter"/>
</dbReference>
<dbReference type="CDD" id="cd12148">
    <property type="entry name" value="fungal_TF_MHR"/>
    <property type="match status" value="1"/>
</dbReference>
<dbReference type="CDD" id="cd00067">
    <property type="entry name" value="GAL4"/>
    <property type="match status" value="1"/>
</dbReference>
<dbReference type="Gene3D" id="4.10.240.10">
    <property type="entry name" value="Zn(2)-C6 fungal-type DNA-binding domain"/>
    <property type="match status" value="1"/>
</dbReference>
<dbReference type="InterPro" id="IPR051127">
    <property type="entry name" value="Fungal_SecMet_Regulators"/>
</dbReference>
<dbReference type="InterPro" id="IPR036864">
    <property type="entry name" value="Zn2-C6_fun-type_DNA-bd_sf"/>
</dbReference>
<dbReference type="InterPro" id="IPR001138">
    <property type="entry name" value="Zn2Cys6_DnaBD"/>
</dbReference>
<dbReference type="PANTHER" id="PTHR47424">
    <property type="entry name" value="REGULATORY PROTEIN GAL4"/>
    <property type="match status" value="1"/>
</dbReference>
<dbReference type="PANTHER" id="PTHR47424:SF3">
    <property type="entry name" value="REGULATORY PROTEIN GAL4"/>
    <property type="match status" value="1"/>
</dbReference>
<dbReference type="Pfam" id="PF00172">
    <property type="entry name" value="Zn_clus"/>
    <property type="match status" value="1"/>
</dbReference>
<dbReference type="SMART" id="SM00066">
    <property type="entry name" value="GAL4"/>
    <property type="match status" value="1"/>
</dbReference>
<dbReference type="SUPFAM" id="SSF57701">
    <property type="entry name" value="Zn2/Cys6 DNA-binding domain"/>
    <property type="match status" value="1"/>
</dbReference>
<dbReference type="PROSITE" id="PS00463">
    <property type="entry name" value="ZN2_CY6_FUNGAL_1"/>
    <property type="match status" value="1"/>
</dbReference>
<dbReference type="PROSITE" id="PS50048">
    <property type="entry name" value="ZN2_CY6_FUNGAL_2"/>
    <property type="match status" value="1"/>
</dbReference>
<accession>Q6CSN1</accession>